<organism>
    <name type="scientific">Dictyostelium discoideum</name>
    <name type="common">Social amoeba</name>
    <dbReference type="NCBI Taxonomy" id="44689"/>
    <lineage>
        <taxon>Eukaryota</taxon>
        <taxon>Amoebozoa</taxon>
        <taxon>Evosea</taxon>
        <taxon>Eumycetozoa</taxon>
        <taxon>Dictyostelia</taxon>
        <taxon>Dictyosteliales</taxon>
        <taxon>Dictyosteliaceae</taxon>
        <taxon>Dictyostelium</taxon>
    </lineage>
</organism>
<dbReference type="EC" id="3.1.3.-"/>
<dbReference type="EMBL" id="AAFI02000162">
    <property type="protein sequence ID" value="EAL62309.1"/>
    <property type="molecule type" value="Genomic_DNA"/>
</dbReference>
<dbReference type="RefSeq" id="XP_635771.1">
    <property type="nucleotide sequence ID" value="XM_630679.1"/>
</dbReference>
<dbReference type="SMR" id="Q54GB2"/>
<dbReference type="FunCoup" id="Q54GB2">
    <property type="interactions" value="640"/>
</dbReference>
<dbReference type="STRING" id="44689.Q54GB2"/>
<dbReference type="PaxDb" id="44689-DDB0238050"/>
<dbReference type="EnsemblProtists" id="EAL62309">
    <property type="protein sequence ID" value="EAL62309"/>
    <property type="gene ID" value="DDB_G0290365"/>
</dbReference>
<dbReference type="GeneID" id="8627575"/>
<dbReference type="KEGG" id="ddi:DDB_G0290365"/>
<dbReference type="dictyBase" id="DDB_G0290365">
    <property type="gene designation" value="ctdspl2"/>
</dbReference>
<dbReference type="VEuPathDB" id="AmoebaDB:DDB_G0290365"/>
<dbReference type="eggNOG" id="KOG1605">
    <property type="taxonomic scope" value="Eukaryota"/>
</dbReference>
<dbReference type="HOGENOM" id="CLU_480972_0_0_1"/>
<dbReference type="InParanoid" id="Q54GB2"/>
<dbReference type="OMA" id="ICINNFC"/>
<dbReference type="PRO" id="PR:Q54GB2"/>
<dbReference type="Proteomes" id="UP000002195">
    <property type="component" value="Chromosome 5"/>
</dbReference>
<dbReference type="GO" id="GO:0004721">
    <property type="term" value="F:phosphoprotein phosphatase activity"/>
    <property type="evidence" value="ECO:0000318"/>
    <property type="project" value="GO_Central"/>
</dbReference>
<dbReference type="CDD" id="cd07521">
    <property type="entry name" value="HAD_FCP1-like"/>
    <property type="match status" value="1"/>
</dbReference>
<dbReference type="FunFam" id="3.40.50.1000:FF:000015">
    <property type="entry name" value="CTD small phosphatase-like protein 2"/>
    <property type="match status" value="1"/>
</dbReference>
<dbReference type="Gene3D" id="3.40.50.1000">
    <property type="entry name" value="HAD superfamily/HAD-like"/>
    <property type="match status" value="1"/>
</dbReference>
<dbReference type="InterPro" id="IPR011948">
    <property type="entry name" value="Dullard_phosphatase"/>
</dbReference>
<dbReference type="InterPro" id="IPR004274">
    <property type="entry name" value="FCP1_dom"/>
</dbReference>
<dbReference type="InterPro" id="IPR036412">
    <property type="entry name" value="HAD-like_sf"/>
</dbReference>
<dbReference type="InterPro" id="IPR023214">
    <property type="entry name" value="HAD_sf"/>
</dbReference>
<dbReference type="InterPro" id="IPR050365">
    <property type="entry name" value="TIM50"/>
</dbReference>
<dbReference type="NCBIfam" id="TIGR02251">
    <property type="entry name" value="HIF-SF_euk"/>
    <property type="match status" value="1"/>
</dbReference>
<dbReference type="PANTHER" id="PTHR12210">
    <property type="entry name" value="DULLARD PROTEIN PHOSPHATASE"/>
    <property type="match status" value="1"/>
</dbReference>
<dbReference type="Pfam" id="PF03031">
    <property type="entry name" value="NIF"/>
    <property type="match status" value="1"/>
</dbReference>
<dbReference type="SMART" id="SM00577">
    <property type="entry name" value="CPDc"/>
    <property type="match status" value="1"/>
</dbReference>
<dbReference type="SUPFAM" id="SSF56784">
    <property type="entry name" value="HAD-like"/>
    <property type="match status" value="1"/>
</dbReference>
<dbReference type="PROSITE" id="PS50969">
    <property type="entry name" value="FCP1"/>
    <property type="match status" value="1"/>
</dbReference>
<gene>
    <name type="primary">ctdspl2</name>
    <name type="ORF">DDB_G0290365</name>
</gene>
<evidence type="ECO:0000250" key="1"/>
<evidence type="ECO:0000255" key="2">
    <source>
        <dbReference type="PROSITE-ProRule" id="PRU00336"/>
    </source>
</evidence>
<evidence type="ECO:0000256" key="3">
    <source>
        <dbReference type="SAM" id="MobiDB-lite"/>
    </source>
</evidence>
<evidence type="ECO:0000305" key="4"/>
<name>CTSL2_DICDI</name>
<sequence>MSSGLKTQTTIDILHDHSVESSSDHLYILKQQQQHQHEDTDSPKKKKLRHQCEETSQYIVPSLNDEVDDLGHHHLHHHHVNNINNSLLKQGLSALSSLSASSTSSISPSSSQSSSPLKQSERSIATSIDSMNDSTSSSSSSNNNNNFSSVPSHNIYTPSCLLSNLNNDTDSIIPNMNGSTDGDGGDIRREKVDENDEEVLCNDNHLSKDNEQEDNMVSFLNESNEEVIQTNNNNNNDNNNSSNICINNFCNINNNQQQQQQQQQQQQNNVNSSIILEDSNKENKTESNNSNSNSNSSPSFFHNLQQHPTSAATTTTTTTTTITTTSATTSIIIKEDNSDDEIDDECDDESEEEEEDEEEFNPFLFIKQLANATTMPPPVALPPKEHSSPKISLVLDLDETLVHCSTEPLEQPHLTFPVFFNNTEYQVFAKKRPFFEEFLHKVSDIFEVIIFTASQEVYANKLLNMIDPNNKIKYRLYRDSCVYVDGNYLKDLSVLGRDLKQVVIIDNSPQSFGFQVDNGIPIESWFEDENDKELLQLVPFLESLTNVEDVRPHIRDKFKLYQLISQA</sequence>
<comment type="function">
    <text evidence="1">Probable phosphatase.</text>
</comment>
<comment type="similarity">
    <text evidence="4">Belongs to the CTDSPL2 family.</text>
</comment>
<keyword id="KW-0378">Hydrolase</keyword>
<keyword id="KW-0904">Protein phosphatase</keyword>
<keyword id="KW-1185">Reference proteome</keyword>
<accession>Q54GB2</accession>
<reference key="1">
    <citation type="journal article" date="2005" name="Nature">
        <title>The genome of the social amoeba Dictyostelium discoideum.</title>
        <authorList>
            <person name="Eichinger L."/>
            <person name="Pachebat J.A."/>
            <person name="Gloeckner G."/>
            <person name="Rajandream M.A."/>
            <person name="Sucgang R."/>
            <person name="Berriman M."/>
            <person name="Song J."/>
            <person name="Olsen R."/>
            <person name="Szafranski K."/>
            <person name="Xu Q."/>
            <person name="Tunggal B."/>
            <person name="Kummerfeld S."/>
            <person name="Madera M."/>
            <person name="Konfortov B.A."/>
            <person name="Rivero F."/>
            <person name="Bankier A.T."/>
            <person name="Lehmann R."/>
            <person name="Hamlin N."/>
            <person name="Davies R."/>
            <person name="Gaudet P."/>
            <person name="Fey P."/>
            <person name="Pilcher K."/>
            <person name="Chen G."/>
            <person name="Saunders D."/>
            <person name="Sodergren E.J."/>
            <person name="Davis P."/>
            <person name="Kerhornou A."/>
            <person name="Nie X."/>
            <person name="Hall N."/>
            <person name="Anjard C."/>
            <person name="Hemphill L."/>
            <person name="Bason N."/>
            <person name="Farbrother P."/>
            <person name="Desany B."/>
            <person name="Just E."/>
            <person name="Morio T."/>
            <person name="Rost R."/>
            <person name="Churcher C.M."/>
            <person name="Cooper J."/>
            <person name="Haydock S."/>
            <person name="van Driessche N."/>
            <person name="Cronin A."/>
            <person name="Goodhead I."/>
            <person name="Muzny D.M."/>
            <person name="Mourier T."/>
            <person name="Pain A."/>
            <person name="Lu M."/>
            <person name="Harper D."/>
            <person name="Lindsay R."/>
            <person name="Hauser H."/>
            <person name="James K.D."/>
            <person name="Quiles M."/>
            <person name="Madan Babu M."/>
            <person name="Saito T."/>
            <person name="Buchrieser C."/>
            <person name="Wardroper A."/>
            <person name="Felder M."/>
            <person name="Thangavelu M."/>
            <person name="Johnson D."/>
            <person name="Knights A."/>
            <person name="Loulseged H."/>
            <person name="Mungall K.L."/>
            <person name="Oliver K."/>
            <person name="Price C."/>
            <person name="Quail M.A."/>
            <person name="Urushihara H."/>
            <person name="Hernandez J."/>
            <person name="Rabbinowitsch E."/>
            <person name="Steffen D."/>
            <person name="Sanders M."/>
            <person name="Ma J."/>
            <person name="Kohara Y."/>
            <person name="Sharp S."/>
            <person name="Simmonds M.N."/>
            <person name="Spiegler S."/>
            <person name="Tivey A."/>
            <person name="Sugano S."/>
            <person name="White B."/>
            <person name="Walker D."/>
            <person name="Woodward J.R."/>
            <person name="Winckler T."/>
            <person name="Tanaka Y."/>
            <person name="Shaulsky G."/>
            <person name="Schleicher M."/>
            <person name="Weinstock G.M."/>
            <person name="Rosenthal A."/>
            <person name="Cox E.C."/>
            <person name="Chisholm R.L."/>
            <person name="Gibbs R.A."/>
            <person name="Loomis W.F."/>
            <person name="Platzer M."/>
            <person name="Kay R.R."/>
            <person name="Williams J.G."/>
            <person name="Dear P.H."/>
            <person name="Noegel A.A."/>
            <person name="Barrell B.G."/>
            <person name="Kuspa A."/>
        </authorList>
    </citation>
    <scope>NUCLEOTIDE SEQUENCE [LARGE SCALE GENOMIC DNA]</scope>
    <source>
        <strain>AX4</strain>
    </source>
</reference>
<proteinExistence type="inferred from homology"/>
<protein>
    <recommendedName>
        <fullName>CTD small phosphatase-like protein 2</fullName>
        <shortName>CTDSP-like 2</shortName>
        <ecNumber>3.1.3.-</ecNumber>
    </recommendedName>
</protein>
<feature type="chain" id="PRO_0000331473" description="CTD small phosphatase-like protein 2">
    <location>
        <begin position="1"/>
        <end position="567"/>
    </location>
</feature>
<feature type="domain" description="FCP1 homology" evidence="2">
    <location>
        <begin position="386"/>
        <end position="544"/>
    </location>
</feature>
<feature type="region of interest" description="Disordered" evidence="3">
    <location>
        <begin position="31"/>
        <end position="53"/>
    </location>
</feature>
<feature type="region of interest" description="Disordered" evidence="3">
    <location>
        <begin position="100"/>
        <end position="150"/>
    </location>
</feature>
<feature type="region of interest" description="Disordered" evidence="3">
    <location>
        <begin position="280"/>
        <end position="361"/>
    </location>
</feature>
<feature type="compositionally biased region" description="Low complexity" evidence="3">
    <location>
        <begin position="100"/>
        <end position="118"/>
    </location>
</feature>
<feature type="compositionally biased region" description="Low complexity" evidence="3">
    <location>
        <begin position="130"/>
        <end position="150"/>
    </location>
</feature>
<feature type="compositionally biased region" description="Low complexity" evidence="3">
    <location>
        <begin position="286"/>
        <end position="297"/>
    </location>
</feature>
<feature type="compositionally biased region" description="Polar residues" evidence="3">
    <location>
        <begin position="298"/>
        <end position="308"/>
    </location>
</feature>
<feature type="compositionally biased region" description="Low complexity" evidence="3">
    <location>
        <begin position="309"/>
        <end position="332"/>
    </location>
</feature>
<feature type="compositionally biased region" description="Acidic residues" evidence="3">
    <location>
        <begin position="337"/>
        <end position="360"/>
    </location>
</feature>